<reference key="1">
    <citation type="journal article" date="2005" name="Science">
        <title>The transcriptional landscape of the mammalian genome.</title>
        <authorList>
            <person name="Carninci P."/>
            <person name="Kasukawa T."/>
            <person name="Katayama S."/>
            <person name="Gough J."/>
            <person name="Frith M.C."/>
            <person name="Maeda N."/>
            <person name="Oyama R."/>
            <person name="Ravasi T."/>
            <person name="Lenhard B."/>
            <person name="Wells C."/>
            <person name="Kodzius R."/>
            <person name="Shimokawa K."/>
            <person name="Bajic V.B."/>
            <person name="Brenner S.E."/>
            <person name="Batalov S."/>
            <person name="Forrest A.R."/>
            <person name="Zavolan M."/>
            <person name="Davis M.J."/>
            <person name="Wilming L.G."/>
            <person name="Aidinis V."/>
            <person name="Allen J.E."/>
            <person name="Ambesi-Impiombato A."/>
            <person name="Apweiler R."/>
            <person name="Aturaliya R.N."/>
            <person name="Bailey T.L."/>
            <person name="Bansal M."/>
            <person name="Baxter L."/>
            <person name="Beisel K.W."/>
            <person name="Bersano T."/>
            <person name="Bono H."/>
            <person name="Chalk A.M."/>
            <person name="Chiu K.P."/>
            <person name="Choudhary V."/>
            <person name="Christoffels A."/>
            <person name="Clutterbuck D.R."/>
            <person name="Crowe M.L."/>
            <person name="Dalla E."/>
            <person name="Dalrymple B.P."/>
            <person name="de Bono B."/>
            <person name="Della Gatta G."/>
            <person name="di Bernardo D."/>
            <person name="Down T."/>
            <person name="Engstrom P."/>
            <person name="Fagiolini M."/>
            <person name="Faulkner G."/>
            <person name="Fletcher C.F."/>
            <person name="Fukushima T."/>
            <person name="Furuno M."/>
            <person name="Futaki S."/>
            <person name="Gariboldi M."/>
            <person name="Georgii-Hemming P."/>
            <person name="Gingeras T.R."/>
            <person name="Gojobori T."/>
            <person name="Green R.E."/>
            <person name="Gustincich S."/>
            <person name="Harbers M."/>
            <person name="Hayashi Y."/>
            <person name="Hensch T.K."/>
            <person name="Hirokawa N."/>
            <person name="Hill D."/>
            <person name="Huminiecki L."/>
            <person name="Iacono M."/>
            <person name="Ikeo K."/>
            <person name="Iwama A."/>
            <person name="Ishikawa T."/>
            <person name="Jakt M."/>
            <person name="Kanapin A."/>
            <person name="Katoh M."/>
            <person name="Kawasawa Y."/>
            <person name="Kelso J."/>
            <person name="Kitamura H."/>
            <person name="Kitano H."/>
            <person name="Kollias G."/>
            <person name="Krishnan S.P."/>
            <person name="Kruger A."/>
            <person name="Kummerfeld S.K."/>
            <person name="Kurochkin I.V."/>
            <person name="Lareau L.F."/>
            <person name="Lazarevic D."/>
            <person name="Lipovich L."/>
            <person name="Liu J."/>
            <person name="Liuni S."/>
            <person name="McWilliam S."/>
            <person name="Madan Babu M."/>
            <person name="Madera M."/>
            <person name="Marchionni L."/>
            <person name="Matsuda H."/>
            <person name="Matsuzawa S."/>
            <person name="Miki H."/>
            <person name="Mignone F."/>
            <person name="Miyake S."/>
            <person name="Morris K."/>
            <person name="Mottagui-Tabar S."/>
            <person name="Mulder N."/>
            <person name="Nakano N."/>
            <person name="Nakauchi H."/>
            <person name="Ng P."/>
            <person name="Nilsson R."/>
            <person name="Nishiguchi S."/>
            <person name="Nishikawa S."/>
            <person name="Nori F."/>
            <person name="Ohara O."/>
            <person name="Okazaki Y."/>
            <person name="Orlando V."/>
            <person name="Pang K.C."/>
            <person name="Pavan W.J."/>
            <person name="Pavesi G."/>
            <person name="Pesole G."/>
            <person name="Petrovsky N."/>
            <person name="Piazza S."/>
            <person name="Reed J."/>
            <person name="Reid J.F."/>
            <person name="Ring B.Z."/>
            <person name="Ringwald M."/>
            <person name="Rost B."/>
            <person name="Ruan Y."/>
            <person name="Salzberg S.L."/>
            <person name="Sandelin A."/>
            <person name="Schneider C."/>
            <person name="Schoenbach C."/>
            <person name="Sekiguchi K."/>
            <person name="Semple C.A."/>
            <person name="Seno S."/>
            <person name="Sessa L."/>
            <person name="Sheng Y."/>
            <person name="Shibata Y."/>
            <person name="Shimada H."/>
            <person name="Shimada K."/>
            <person name="Silva D."/>
            <person name="Sinclair B."/>
            <person name="Sperling S."/>
            <person name="Stupka E."/>
            <person name="Sugiura K."/>
            <person name="Sultana R."/>
            <person name="Takenaka Y."/>
            <person name="Taki K."/>
            <person name="Tammoja K."/>
            <person name="Tan S.L."/>
            <person name="Tang S."/>
            <person name="Taylor M.S."/>
            <person name="Tegner J."/>
            <person name="Teichmann S.A."/>
            <person name="Ueda H.R."/>
            <person name="van Nimwegen E."/>
            <person name="Verardo R."/>
            <person name="Wei C.L."/>
            <person name="Yagi K."/>
            <person name="Yamanishi H."/>
            <person name="Zabarovsky E."/>
            <person name="Zhu S."/>
            <person name="Zimmer A."/>
            <person name="Hide W."/>
            <person name="Bult C."/>
            <person name="Grimmond S.M."/>
            <person name="Teasdale R.D."/>
            <person name="Liu E.T."/>
            <person name="Brusic V."/>
            <person name="Quackenbush J."/>
            <person name="Wahlestedt C."/>
            <person name="Mattick J.S."/>
            <person name="Hume D.A."/>
            <person name="Kai C."/>
            <person name="Sasaki D."/>
            <person name="Tomaru Y."/>
            <person name="Fukuda S."/>
            <person name="Kanamori-Katayama M."/>
            <person name="Suzuki M."/>
            <person name="Aoki J."/>
            <person name="Arakawa T."/>
            <person name="Iida J."/>
            <person name="Imamura K."/>
            <person name="Itoh M."/>
            <person name="Kato T."/>
            <person name="Kawaji H."/>
            <person name="Kawagashira N."/>
            <person name="Kawashima T."/>
            <person name="Kojima M."/>
            <person name="Kondo S."/>
            <person name="Konno H."/>
            <person name="Nakano K."/>
            <person name="Ninomiya N."/>
            <person name="Nishio T."/>
            <person name="Okada M."/>
            <person name="Plessy C."/>
            <person name="Shibata K."/>
            <person name="Shiraki T."/>
            <person name="Suzuki S."/>
            <person name="Tagami M."/>
            <person name="Waki K."/>
            <person name="Watahiki A."/>
            <person name="Okamura-Oho Y."/>
            <person name="Suzuki H."/>
            <person name="Kawai J."/>
            <person name="Hayashizaki Y."/>
        </authorList>
    </citation>
    <scope>NUCLEOTIDE SEQUENCE [LARGE SCALE MRNA] (ISOFORM 1)</scope>
    <source>
        <strain evidence="17">C57BL/6J</strain>
        <strain evidence="16">NOD</strain>
        <tissue evidence="17">Amnion</tissue>
    </source>
</reference>
<reference key="2">
    <citation type="journal article" date="2009" name="PLoS Biol.">
        <title>Lineage-specific biology revealed by a finished genome assembly of the mouse.</title>
        <authorList>
            <person name="Church D.M."/>
            <person name="Goodstadt L."/>
            <person name="Hillier L.W."/>
            <person name="Zody M.C."/>
            <person name="Goldstein S."/>
            <person name="She X."/>
            <person name="Bult C.J."/>
            <person name="Agarwala R."/>
            <person name="Cherry J.L."/>
            <person name="DiCuccio M."/>
            <person name="Hlavina W."/>
            <person name="Kapustin Y."/>
            <person name="Meric P."/>
            <person name="Maglott D."/>
            <person name="Birtle Z."/>
            <person name="Marques A.C."/>
            <person name="Graves T."/>
            <person name="Zhou S."/>
            <person name="Teague B."/>
            <person name="Potamousis K."/>
            <person name="Churas C."/>
            <person name="Place M."/>
            <person name="Herschleb J."/>
            <person name="Runnheim R."/>
            <person name="Forrest D."/>
            <person name="Amos-Landgraf J."/>
            <person name="Schwartz D.C."/>
            <person name="Cheng Z."/>
            <person name="Lindblad-Toh K."/>
            <person name="Eichler E.E."/>
            <person name="Ponting C.P."/>
        </authorList>
    </citation>
    <scope>NUCLEOTIDE SEQUENCE [LARGE SCALE GENOMIC DNA]</scope>
    <source>
        <strain>C57BL/6J</strain>
    </source>
</reference>
<reference key="3">
    <citation type="submission" date="2005-09" db="EMBL/GenBank/DDBJ databases">
        <authorList>
            <person name="Mural R.J."/>
            <person name="Adams M.D."/>
            <person name="Myers E.W."/>
            <person name="Smith H.O."/>
            <person name="Venter J.C."/>
        </authorList>
    </citation>
    <scope>NUCLEOTIDE SEQUENCE [LARGE SCALE GENOMIC DNA]</scope>
</reference>
<reference key="4">
    <citation type="journal article" date="2004" name="Genome Res.">
        <title>The status, quality, and expansion of the NIH full-length cDNA project: the Mammalian Gene Collection (MGC).</title>
        <authorList>
            <consortium name="The MGC Project Team"/>
        </authorList>
    </citation>
    <scope>NUCLEOTIDE SEQUENCE [LARGE SCALE MRNA] (ISOFORM 2)</scope>
    <source>
        <strain>C57BL/6J</strain>
        <tissue>Head</tissue>
    </source>
</reference>
<reference key="5">
    <citation type="journal article" date="2014" name="Hum. Mol. Genet.">
        <title>C9ORF72, implicated in amytrophic lateral sclerosis and frontotemporal dementia, regulates endosomal trafficking.</title>
        <authorList>
            <person name="Farg M.A."/>
            <person name="Sundaramoorthy V."/>
            <person name="Sultana J.M."/>
            <person name="Yang S."/>
            <person name="Atkinson R.A."/>
            <person name="Levina V."/>
            <person name="Halloran M.A."/>
            <person name="Gleeson P.A."/>
            <person name="Blair I.P."/>
            <person name="Soo K.Y."/>
            <person name="King A.E."/>
            <person name="Atkin J.D."/>
        </authorList>
    </citation>
    <scope>INTERACTION WITH RAB1A AND RAB7A</scope>
    <scope>SUBCELLULAR LOCATION</scope>
</reference>
<reference key="6">
    <citation type="journal article" date="2015" name="Acta Neuropathol. Commun.">
        <title>C9ORF72 expression and cellular localization over mouse development.</title>
        <authorList>
            <person name="Atkinson R.A."/>
            <person name="Fernandez-Martos C.M."/>
            <person name="Atkin J.D."/>
            <person name="Vickers J.C."/>
            <person name="King A.E."/>
        </authorList>
    </citation>
    <scope>SUBCELLULAR LOCATION</scope>
    <scope>DEVELOPMENTAL STAGE</scope>
</reference>
<reference key="7">
    <citation type="journal article" date="2016" name="Acta Neuropathol. Commun.">
        <authorList>
            <person name="Atkinson R.A."/>
            <person name="Fernandez-Martos C.M."/>
            <person name="Atkin J.D."/>
            <person name="Vickers J.C."/>
            <person name="King A.E."/>
        </authorList>
    </citation>
    <scope>ERRATUM OF PUBMED:26408000</scope>
</reference>
<reference key="8">
    <citation type="journal article" date="2015" name="Ann. Neurol.">
        <title>C9orf72 ablation in mice does not cause motor neuron degeneration or motor deficits.</title>
        <authorList>
            <person name="Koppers M."/>
            <person name="Blokhuis A.M."/>
            <person name="Westeneng H.J."/>
            <person name="Terpstra M.L."/>
            <person name="Zundel C.A."/>
            <person name="Vieira de Sa R."/>
            <person name="Schellevis R.D."/>
            <person name="Waite A.J."/>
            <person name="Blake D.J."/>
            <person name="Veldink J.H."/>
            <person name="van den Berg L.H."/>
            <person name="Pasterkamp R.J."/>
        </authorList>
    </citation>
    <scope>TISSUE SPECIFICITY</scope>
    <scope>DISRUPTION PHENOTYPE</scope>
</reference>
<reference key="9">
    <citation type="journal article" date="2016" name="Acta Neuropathol. Commun.">
        <title>The ALS/FTLD associated protein C9orf72 associates with SMCR8 and WDR41 to regulate the autophagy-lysosome pathway.</title>
        <authorList>
            <person name="Sullivan P.M."/>
            <person name="Zhou X."/>
            <person name="Robins A.M."/>
            <person name="Paushter D.H."/>
            <person name="Kim D."/>
            <person name="Smolka M.B."/>
            <person name="Hu F."/>
        </authorList>
    </citation>
    <scope>FUNCTION</scope>
    <scope>DISRUPTION PHENOTYPE</scope>
</reference>
<reference key="10">
    <citation type="journal article" date="2016" name="J. Anat.">
        <title>Dynamic expression of the mouse orthologue of the human amyotropic lateral sclerosis associated gene C9orf72 during central nervous system development and neuronal differentiation.</title>
        <authorList>
            <person name="Ferguson R."/>
            <person name="Serafeimidou-Pouliou E."/>
            <person name="Subramanian V."/>
        </authorList>
    </citation>
    <scope>SUBCELLULAR LOCATION</scope>
    <scope>TISSUE SPECIFICITY</scope>
</reference>
<reference key="11">
    <citation type="journal article" date="2016" name="Nat. Neurosci.">
        <title>C9ORF72 interaction with cofilin modulates actin dynamics in motor neurons.</title>
        <authorList>
            <person name="Sivadasan R."/>
            <person name="Hornburg D."/>
            <person name="Drepper C."/>
            <person name="Frank N."/>
            <person name="Jablonka S."/>
            <person name="Hansel A."/>
            <person name="Lojewski X."/>
            <person name="Sterneckert J."/>
            <person name="Hermann A."/>
            <person name="Shaw P.J."/>
            <person name="Ince P.G."/>
            <person name="Mann M."/>
            <person name="Meissner F."/>
            <person name="Sendtner M."/>
        </authorList>
    </citation>
    <scope>FUNCTION</scope>
    <scope>INTERACTION WITH ARF1; ARF6 AND CFL1</scope>
</reference>
<reference key="12">
    <citation type="journal article" date="2016" name="PLoS Genet.">
        <title>Loss of C9orf72 enhances autophagic activity via deregulated mTOR and TFEB signaling.</title>
        <authorList>
            <person name="Ugolino J."/>
            <person name="Ji Y.J."/>
            <person name="Conchina K."/>
            <person name="Chu J."/>
            <person name="Nirujogi R.S."/>
            <person name="Pandey A."/>
            <person name="Brady N.R."/>
            <person name="Hamacher-Brady A."/>
            <person name="Wang J."/>
        </authorList>
    </citation>
    <scope>FUNCTION</scope>
    <scope>DISRUPTION PHENOTYPE</scope>
    <scope>INTERACTION WITH SMCR8</scope>
</reference>
<reference key="13">
    <citation type="journal article" date="2016" name="Science">
        <title>C9orf72 is required for proper macrophage and microglial function in mice.</title>
        <authorList>
            <person name="O'Rourke J.G."/>
            <person name="Bogdanik L."/>
            <person name="Yanez A."/>
            <person name="Lall D."/>
            <person name="Wolf A.J."/>
            <person name="Muhammad A.K."/>
            <person name="Ho R."/>
            <person name="Carmona S."/>
            <person name="Vit J.P."/>
            <person name="Zarrow J."/>
            <person name="Kim K.J."/>
            <person name="Bell S."/>
            <person name="Harms M.B."/>
            <person name="Miller T.M."/>
            <person name="Dangler C.A."/>
            <person name="Underhill D.M."/>
            <person name="Goodridge H.S."/>
            <person name="Lutz C.M."/>
            <person name="Baloh R.H."/>
        </authorList>
    </citation>
    <scope>FUNCTION</scope>
    <scope>TISSUE SPECIFICITY</scope>
    <scope>DISRUPTION PHENOTYPE</scope>
</reference>
<reference key="14">
    <citation type="journal article" date="2016" name="Sci. Adv.">
        <title>A C9ORF72/SMCR8-containing complex regulates ULK1 and plays a dual role in autophagy.</title>
        <authorList>
            <person name="Yang M."/>
            <person name="Liang C."/>
            <person name="Swaminathan K."/>
            <person name="Herrlinger S."/>
            <person name="Lai F."/>
            <person name="Shiekhattar R."/>
            <person name="Chen J.F."/>
        </authorList>
    </citation>
    <scope>FUNCTION</scope>
    <scope>SUBCELLULAR LOCATION</scope>
</reference>
<reference key="15">
    <citation type="journal article" date="2016" name="Sci. Transl. Med.">
        <title>Loss-of-function mutations in the C9ORF72 mouse ortholog cause fatal autoimmune disease.</title>
        <authorList>
            <person name="Burberry A."/>
            <person name="Suzuki N."/>
            <person name="Wang J.Y."/>
            <person name="Moccia R."/>
            <person name="Mordes D.A."/>
            <person name="Stewart M.H."/>
            <person name="Suzuki-Uematsu S."/>
            <person name="Ghosh S."/>
            <person name="Singh A."/>
            <person name="Merkle F.T."/>
            <person name="Koszka K."/>
            <person name="Li Q.Z."/>
            <person name="Zon L."/>
            <person name="Rossi D.J."/>
            <person name="Trowbridge J.J."/>
            <person name="Notarangelo L.D."/>
            <person name="Eggan K."/>
        </authorList>
    </citation>
    <scope>FUNCTION</scope>
    <scope>DISRUPTION PHENOTYPE</scope>
</reference>
<reference key="16">
    <citation type="journal article" date="2018" name="Genes Dev.">
        <title>A C9orf72-CARM1 axis regulates lipid metabolism under glucose starvation-induced nutrient stress.</title>
        <authorList>
            <person name="Liu Y."/>
            <person name="Wang T."/>
            <person name="Ji Y.J."/>
            <person name="Johnson K."/>
            <person name="Liu H."/>
            <person name="Johnson K."/>
            <person name="Bailey S."/>
            <person name="Suk Y."/>
            <person name="Lu Y.N."/>
            <person name="Liu M."/>
            <person name="Wang J."/>
        </authorList>
    </citation>
    <scope>FUNCTION</scope>
    <scope>INTERACTION WITH CALM1</scope>
</reference>
<reference key="17">
    <citation type="journal article" date="2019" name="Acta Neuropathol. Commun.">
        <title>Synaptic localization of C9orf72 regulates post-synaptic glutamate receptor 1 levels.</title>
        <authorList>
            <person name="Xiao S."/>
            <person name="McKeever P.M."/>
            <person name="Lau A."/>
            <person name="Robertson J."/>
        </authorList>
    </citation>
    <scope>FUNCTION</scope>
    <scope>INTERACTION WITH DLG4</scope>
    <scope>SUBCELLULAR LOCATION</scope>
    <scope>TISSUE SPECIFICITY</scope>
    <scope>DISRUPTION PHENOTYPE</scope>
</reference>
<sequence length="481" mass="54278">MSTICPPPSPAVAKTEIALSGESPLLAATFAYWDNILGPRVRHIWAPKTDQVLLSDGEITFLANHTLNGEILRNAESGAIDVKFFVLSEKGVIIVSLIFDGNWNGDRSTYGLSIILPQTELSFYLPLHRVCVDRLTHIIRKGRIWMHKERQENVQKIVLEGTERMEDQGQSIIPMLTGEVIPVMELLASMKSHSVPEDIDIADTVLNDDDIGDSCHEGFLLNAISSHLQTCGCSVVVGSSAEKVNKIVRTLCLFLTPAERKCSRLCEAESSFKYESGLFVQGLLKDATGSFVLPFRQVMYAPYPTTHIDVDVNTVKQMPPCHEHIYNQRRYMRSELTAFWRATSEEDMAQDTIIYTDESFTPDLNIFQDVLHRDTLVKAFLDQVFHLKPGLSLRSTFLAQFLLILHRKALTLIKYIEDDTQKGKKPFKSLRNLKIDLDLTAEGDLNIIMALAEKIKPGLHSFIFGRPFYTSVQERDVLMTF</sequence>
<keyword id="KW-0025">Alternative splicing</keyword>
<keyword id="KW-0072">Autophagy</keyword>
<keyword id="KW-0966">Cell projection</keyword>
<keyword id="KW-0963">Cytoplasm</keyword>
<keyword id="KW-0968">Cytoplasmic vesicle</keyword>
<keyword id="KW-0967">Endosome</keyword>
<keyword id="KW-0344">Guanine-nucleotide releasing factor</keyword>
<keyword id="KW-0458">Lysosome</keyword>
<keyword id="KW-0539">Nucleus</keyword>
<keyword id="KW-1185">Reference proteome</keyword>
<keyword id="KW-0964">Secreted</keyword>
<keyword id="KW-0770">Synapse</keyword>
<feature type="chain" id="PRO_0000089712" description="Guanine nucleotide exchange factor C9orf72 homolog">
    <location>
        <begin position="1"/>
        <end position="481"/>
    </location>
</feature>
<feature type="domain" description="uDENN C9ORF72-type" evidence="2">
    <location>
        <begin position="23"/>
        <end position="194"/>
    </location>
</feature>
<feature type="domain" description="cDENN C9ORF72-type" evidence="2">
    <location>
        <begin position="200"/>
        <end position="343"/>
    </location>
</feature>
<feature type="domain" description="dDENN C9ORF72-type" evidence="2">
    <location>
        <begin position="370"/>
        <end position="464"/>
    </location>
</feature>
<feature type="region of interest" description="Required for the homodimerization of the C9orf72-SMCR8 complex" evidence="1">
    <location>
        <begin position="461"/>
        <end position="481"/>
    </location>
</feature>
<feature type="splice variant" id="VSP_059260" description="In isoform 2.">
    <location>
        <begin position="421"/>
        <end position="481"/>
    </location>
</feature>
<feature type="sequence conflict" description="In Ref. 1; BAE39453." evidence="15" ref="1">
    <original>R</original>
    <variation>T</variation>
    <location>
        <position position="373"/>
    </location>
</feature>
<proteinExistence type="evidence at protein level"/>
<comment type="function">
    <text evidence="1 6 7 8 10 11 12 13 14">Acts as a guanine-nucleotide releasing factor (GEF) for Rab GTPases by promoting the conversion of inactive RAB-GDP to the active form RAB-GTP (PubMed:27193190, PubMed:27617292). Acts as a GEF for RAB39A which enables HOPS-mediated autophagosome-lysosome membrane tethering and fusion in mammalian autophagy (By similarity). Component of the C9orf72-SMCR8 complex where both subunits display GEF activity and that regulates autophagy (PubMed:27193190, PubMed:27617292). As part of the C9orf72-SMCR8-WDR41 (CSW) complex, functions as GEF for RAB8A, and RAB39B, thereby promoting autophagosome maturation (By similarity). As part of the C9orf72-SMCR8 complex, also functions as GTPase activating protein (GAP) for RAB8A and RAB11A in vitro (By similarity). The C9orf72-SMCR8 complex also acts as a regulator of autophagy initiation by interacting with the ULK1/ATG1 kinase complex and modulating its protein kinase activity (PubMed:27193190, PubMed:27617292). Promotes initiation of autophagy by regulating the RAB1A-dependent trafficking of the ULK1/ATG1 kinase complex to the phagophore which leads to autophagosome formation (By similarity). Acts as a regulator of mTORC1 signaling by promoting phosphorylation of mTORC1 substrates (PubMed:27875531). Plays a role in endosomal trafficking (PubMed:26989253). May be involved in regulating the maturation of phagosomes to lysosomes (PubMed:26989253). Promotes the lysosomal localization and lysosome-mediated degradation of CARM1 which leads to inhibition of starvation-induced lipid metabolism (PubMed:30366907). Regulates actin dynamics in motor neurons by inhibiting the GTP-binding activity of ARF6, leading to ARF6 inactivation (PubMed:27723745). This reduces the activity of the LIMK1 and LIMK2 kinases which are responsible for phosphorylation and inactivation of CFL1/cofilin, leading to cofilin activation (PubMed:27723745). Positively regulates axon extension and axon growth cone size in spinal motor neurons (PubMed:27723745). Required for SMCR8 protein expression and localization at pre- and post-synaptic compartments in the forebrain, also regulates protein abundance of RAB3A and GRIA1/GLUR1 in post-synaptic compartments in the forebrain and hippocampus (PubMed:31651360). Plays a role within the hematopoietic system in restricting inflammation and the development of autoimmunity (PubMed:27412785).</text>
</comment>
<comment type="subunit">
    <text evidence="1 3 11 12 13 14">Component of the C9orf72-SMCR8 complex, at least composed of C9orf72, SMCR8 and WDR41 (Probable). The complex is formed of two protomers, each individually consisting of one molecule each of C9orf72, SMCR8 and WDR41 (By similarity). The protomers homodimerize via an interaction between C9orf72 (via C-terminus) and SMCR8 (via N-terminus) (By similarity). Within each protomer SMCR8 (via DENN domain) acts as a bridging protein between WDR41 (via C-terminus and N-terminus) and C9orf72 (via C-terminus) (By similarity). The C9orf72-SMCR8 complex associates with the ULK1/ATG1 kinase complex (By similarity). Interacts with ULK1/ATG1 kinase complex members ULK1, ATG13 and RB1CC1 (By similarity). Interacts with SMCR8; the interaction is direct (PubMed:27875531). Interacts with HNRNPA1, HNRNPA2B1 and UBQLN2 (By similarity). Interacts with small Rab GTPase RAB1A; the interaction mediates recruitment of RAB1A to the ULK1/ATG1 kinase complex (PubMed:24549040). Also interacts with small Rab GTPase RAB7A (PubMed:24549040). Interacts with cofilin (PubMed:27723745). Interacts with GTP-binding proteins ARF1 and ARF6 (PubMed:27723745). Interacts with the DLG4/PSD-95 (PubMed:31651360). Interacts with CARM1 (via PH domain-like fold) (PubMed:30366907). Interacts with RAB39A and RAB39B (in GDP-bound forms); functions as GEF for RAB39A and RAB39B (By similarity).</text>
</comment>
<comment type="subcellular location">
    <subcellularLocation>
        <location evidence="3 5 9">Nucleus</location>
    </subcellularLocation>
    <subcellularLocation>
        <location evidence="3 5 9 10">Cytoplasm</location>
    </subcellularLocation>
    <subcellularLocation>
        <location evidence="1">Cytoplasm</location>
        <location evidence="1">P-body</location>
    </subcellularLocation>
    <subcellularLocation>
        <location evidence="1">Cytoplasm</location>
        <location evidence="1">Stress granule</location>
    </subcellularLocation>
    <subcellularLocation>
        <location evidence="1">Endosome</location>
    </subcellularLocation>
    <subcellularLocation>
        <location evidence="1">Lysosome</location>
    </subcellularLocation>
    <subcellularLocation>
        <location evidence="1">Cytoplasmic vesicle</location>
        <location evidence="1">Autophagosome</location>
    </subcellularLocation>
    <subcellularLocation>
        <location evidence="1">Autolysosome</location>
    </subcellularLocation>
    <subcellularLocation>
        <location evidence="3">Secreted</location>
    </subcellularLocation>
    <subcellularLocation>
        <location evidence="1">Cell projection</location>
        <location evidence="1">Axon</location>
    </subcellularLocation>
    <subcellularLocation>
        <location evidence="1">Cell projection</location>
        <location evidence="1">Growth cone</location>
    </subcellularLocation>
    <subcellularLocation>
        <location evidence="5">Perikaryon</location>
    </subcellularLocation>
    <text evidence="1 9">Detected in the cytoplasm of neurons from brain tissue (By similarity). Detected in the nucleus in fibroblasts (By similarity). Associates with cytoplasmic stress granules following cellular stress (By similarity). During corticogenesis, transitions from being predominantly cytoplasmic to a more even nucleocytoplasmic distribution (PubMed:27476503). Majorly localized in cytosol under basal conditions (By similarity). Majorly gathered on autolysosomes structures under autophagy-induced conditions (By similarity).</text>
</comment>
<comment type="subcellular location">
    <molecule>Isoform 1</molecule>
    <subcellularLocation>
        <location evidence="1">Perikaryon</location>
    </subcellularLocation>
    <subcellularLocation>
        <location evidence="1">Cell projection</location>
        <location evidence="1">Dendrite</location>
    </subcellularLocation>
    <subcellularLocation>
        <location evidence="14">Presynapse</location>
    </subcellularLocation>
    <subcellularLocation>
        <location evidence="14">Postsynapse</location>
    </subcellularLocation>
    <text evidence="1">Expressed diffusely throughout the cytoplasm and dendritic processes of cerebellar Purkinje cells. Also expressed diffusely throughout the cytoplasm of spinal motor neurons.</text>
</comment>
<comment type="alternative products">
    <event type="alternative splicing"/>
    <isoform>
        <id>Q6DFW0-1</id>
        <name>1</name>
        <sequence type="displayed"/>
    </isoform>
    <isoform>
        <id>Q6DFW0-2</id>
        <name>2</name>
        <sequence type="described" ref="VSP_059260"/>
    </isoform>
</comment>
<comment type="tissue specificity">
    <text evidence="4 6 9">Expressed in postnatal cerebellum and cortex (at protein level). Neuronal expression is detected in several regions of the adult brain and spinal cord (PubMed:26044557). Prominent expression also observed in embryonic and early postnatal neurons including retinal ganglion cells, sensory neurons in the olfactory epithelium and in dorsal root ganglia, and spinal motor neurons (PubMed:26044557). Expressed in the developing cerebral cortex, cerebellum, olfactory bulb, hippocampus and spinal cord in the embryo and in P0 cortical neurons and astrocytes (PubMed:27476503). Also expressed in non-neuronal tissues such as kidney and tooth (PubMed:26044557). In the spleen, highly expressed in myeloid cells compared to B cell and T cell populations where expression is much lower (PubMed:26989253). In the brain, highly expressed in microglia (PubMed:26989253).</text>
</comment>
<comment type="tissue specificity">
    <molecule>Isoform 1</molecule>
    <text evidence="14">Expressed in the forebrain, including in the glomerular layer of the olfactory bulb (at protein level).</text>
</comment>
<comment type="developmental stage">
    <text evidence="5">Expressed in cerebral cortex and hippocampus at embryonic day 18 and postnatal days 1, 7, 14, 28 and 56.</text>
</comment>
<comment type="disruption phenotype">
    <text evidence="4 6 7 8 12 14">Decreased life span (PubMed:27412785, PubMed:27875531). However, another report did not observe any effect on life span (PubMed:26989253). Lymph node and spleen enlargement phenotype accompanied by macrophage infiltration (PubMed:26989253, PubMed:27193190, PubMed:27412785, PubMed:27875531). Severe inflammation also observed in liver (PubMed:27193190, PubMed:27412785). Increased total white blood cell count due to a significant increase in the number of circulating neutrophils (PubMed:27412785). Significantly reduced platelet and red blood cell count (PubMed:27412785). Increased levels of autophagy and lysosomal proteins and autophagy defects in the spleen and liver (PubMed:27193190). Impaired activation of MTOR/mTOR (PubMed:27875531). Massive up-regulation of the cell surface receptor Trem2 (PubMed:26989253). Significantly increased levels of a number of inflammatory chemokines and cytokines (PubMed:26989253, PubMed:27412785). Increased levels of autoantibodies indicative of an autoimmune phenotype (PubMed:27412785). Normal weight gain, sensorimotor coordination, limb strength, femoral motor and sensory axon counts, and muscle electrophysiology (PubMed:26989253). Conditional knockout in neurons and glial cells results in significantly reduced body weight but does not induce motor neuron degeneration, defects in motor function or altered survival (PubMed:26044557). SMCR8 protein expression is abolished in pre- and post-synaptic compartments in forebrain synapses (PubMed:31651360). RAB3A expression levels are increased in synaptosomes, however are decreased in post-synaptic compartments of the forebrain and in the hippocampus (PubMed:31651360). GRIA1/GLUR1 protein levels are increased in forebrain post-synaptic compartments and in the hippocampus (PubMed:31651360).</text>
</comment>
<name>CI072_MOUSE</name>
<protein>
    <recommendedName>
        <fullName evidence="15">Guanine nucleotide exchange factor C9orf72 homolog</fullName>
    </recommendedName>
</protein>
<organism>
    <name type="scientific">Mus musculus</name>
    <name type="common">Mouse</name>
    <dbReference type="NCBI Taxonomy" id="10090"/>
    <lineage>
        <taxon>Eukaryota</taxon>
        <taxon>Metazoa</taxon>
        <taxon>Chordata</taxon>
        <taxon>Craniata</taxon>
        <taxon>Vertebrata</taxon>
        <taxon>Euteleostomi</taxon>
        <taxon>Mammalia</taxon>
        <taxon>Eutheria</taxon>
        <taxon>Euarchontoglires</taxon>
        <taxon>Glires</taxon>
        <taxon>Rodentia</taxon>
        <taxon>Myomorpha</taxon>
        <taxon>Muroidea</taxon>
        <taxon>Muridae</taxon>
        <taxon>Murinae</taxon>
        <taxon>Mus</taxon>
        <taxon>Mus</taxon>
    </lineage>
</organism>
<dbReference type="EMBL" id="AK154817">
    <property type="protein sequence ID" value="BAE32850.1"/>
    <property type="molecule type" value="mRNA"/>
</dbReference>
<dbReference type="EMBL" id="AK167354">
    <property type="protein sequence ID" value="BAE39453.1"/>
    <property type="molecule type" value="mRNA"/>
</dbReference>
<dbReference type="EMBL" id="AL831776">
    <property type="status" value="NOT_ANNOTATED_CDS"/>
    <property type="molecule type" value="Genomic_DNA"/>
</dbReference>
<dbReference type="EMBL" id="CH466538">
    <property type="protein sequence ID" value="EDL05455.1"/>
    <property type="molecule type" value="Genomic_DNA"/>
</dbReference>
<dbReference type="EMBL" id="CH466538">
    <property type="protein sequence ID" value="EDL05456.1"/>
    <property type="molecule type" value="Genomic_DNA"/>
</dbReference>
<dbReference type="EMBL" id="BC076612">
    <property type="protein sequence ID" value="AAH76612.1"/>
    <property type="molecule type" value="mRNA"/>
</dbReference>
<dbReference type="CCDS" id="CCDS38708.1">
    <molecule id="Q6DFW0-1"/>
</dbReference>
<dbReference type="RefSeq" id="NP_001074812.1">
    <molecule id="Q6DFW0-1"/>
    <property type="nucleotide sequence ID" value="NM_001081343.2"/>
</dbReference>
<dbReference type="RefSeq" id="XP_006538355.1">
    <molecule id="Q6DFW0-1"/>
    <property type="nucleotide sequence ID" value="XM_006538292.4"/>
</dbReference>
<dbReference type="RefSeq" id="XP_006538356.1">
    <molecule id="Q6DFW0-1"/>
    <property type="nucleotide sequence ID" value="XM_006538293.5"/>
</dbReference>
<dbReference type="SMR" id="Q6DFW0"/>
<dbReference type="ComplexPortal" id="CPX-3962">
    <molecule id="Q6DFW0-1"/>
    <property type="entry name" value="C9orf72-SMCR8 complex"/>
</dbReference>
<dbReference type="FunCoup" id="Q6DFW0">
    <property type="interactions" value="2273"/>
</dbReference>
<dbReference type="IntAct" id="Q6DFW0">
    <property type="interactions" value="1"/>
</dbReference>
<dbReference type="MINT" id="Q6DFW0"/>
<dbReference type="STRING" id="10090.ENSMUSP00000103762"/>
<dbReference type="iPTMnet" id="Q6DFW0"/>
<dbReference type="PhosphoSitePlus" id="Q6DFW0"/>
<dbReference type="SwissPalm" id="Q6DFW0"/>
<dbReference type="PaxDb" id="10090-ENSMUSP00000103762"/>
<dbReference type="Pumba" id="Q6DFW0"/>
<dbReference type="Antibodypedia" id="10609">
    <property type="antibodies" value="265 antibodies from 32 providers"/>
</dbReference>
<dbReference type="Ensembl" id="ENSMUST00000084724.10">
    <molecule id="Q6DFW0-2"/>
    <property type="protein sequence ID" value="ENSMUSP00000081775.4"/>
    <property type="gene ID" value="ENSMUSG00000028300.15"/>
</dbReference>
<dbReference type="Ensembl" id="ENSMUST00000108127.4">
    <molecule id="Q6DFW0-1"/>
    <property type="protein sequence ID" value="ENSMUSP00000103762.4"/>
    <property type="gene ID" value="ENSMUSG00000028300.15"/>
</dbReference>
<dbReference type="GeneID" id="73205"/>
<dbReference type="KEGG" id="mmu:73205"/>
<dbReference type="UCSC" id="uc008sgv.1">
    <property type="organism name" value="mouse"/>
</dbReference>
<dbReference type="UCSC" id="uc008sgw.1">
    <molecule id="Q6DFW0-1"/>
    <property type="organism name" value="mouse"/>
</dbReference>
<dbReference type="AGR" id="MGI:1920455"/>
<dbReference type="CTD" id="203228"/>
<dbReference type="MGI" id="MGI:1920455">
    <property type="gene designation" value="C9orf72"/>
</dbReference>
<dbReference type="VEuPathDB" id="HostDB:ENSMUSG00000028300"/>
<dbReference type="eggNOG" id="ENOG502QSST">
    <property type="taxonomic scope" value="Eukaryota"/>
</dbReference>
<dbReference type="GeneTree" id="ENSGT00390000005644"/>
<dbReference type="InParanoid" id="Q6DFW0"/>
<dbReference type="OMA" id="QPFYTSV"/>
<dbReference type="OrthoDB" id="10252077at2759"/>
<dbReference type="TreeFam" id="TF313315"/>
<dbReference type="BioGRID-ORCS" id="73205">
    <property type="hits" value="4 hits in 76 CRISPR screens"/>
</dbReference>
<dbReference type="PRO" id="PR:Q6DFW0"/>
<dbReference type="Proteomes" id="UP000000589">
    <property type="component" value="Chromosome 4"/>
</dbReference>
<dbReference type="RNAct" id="Q6DFW0">
    <property type="molecule type" value="protein"/>
</dbReference>
<dbReference type="Bgee" id="ENSMUSG00000028300">
    <property type="expression patterns" value="Expressed in facial nucleus and 266 other cell types or tissues"/>
</dbReference>
<dbReference type="ExpressionAtlas" id="Q6DFW0">
    <property type="expression patterns" value="baseline and differential"/>
</dbReference>
<dbReference type="GO" id="GO:1990316">
    <property type="term" value="C:Atg1/ULK1 kinase complex"/>
    <property type="evidence" value="ECO:0007669"/>
    <property type="project" value="Ensembl"/>
</dbReference>
<dbReference type="GO" id="GO:0005776">
    <property type="term" value="C:autophagosome"/>
    <property type="evidence" value="ECO:0000250"/>
    <property type="project" value="UniProtKB"/>
</dbReference>
<dbReference type="GO" id="GO:0044295">
    <property type="term" value="C:axonal growth cone"/>
    <property type="evidence" value="ECO:0000250"/>
    <property type="project" value="UniProtKB"/>
</dbReference>
<dbReference type="GO" id="GO:0005737">
    <property type="term" value="C:cytoplasm"/>
    <property type="evidence" value="ECO:0000314"/>
    <property type="project" value="UniProtKB"/>
</dbReference>
<dbReference type="GO" id="GO:0010494">
    <property type="term" value="C:cytoplasmic stress granule"/>
    <property type="evidence" value="ECO:0000250"/>
    <property type="project" value="UniProtKB"/>
</dbReference>
<dbReference type="GO" id="GO:0005829">
    <property type="term" value="C:cytosol"/>
    <property type="evidence" value="ECO:0000250"/>
    <property type="project" value="UniProtKB"/>
</dbReference>
<dbReference type="GO" id="GO:0030425">
    <property type="term" value="C:dendrite"/>
    <property type="evidence" value="ECO:0000250"/>
    <property type="project" value="UniProtKB"/>
</dbReference>
<dbReference type="GO" id="GO:0005768">
    <property type="term" value="C:endosome"/>
    <property type="evidence" value="ECO:0000250"/>
    <property type="project" value="UniProtKB"/>
</dbReference>
<dbReference type="GO" id="GO:0005615">
    <property type="term" value="C:extracellular space"/>
    <property type="evidence" value="ECO:0000314"/>
    <property type="project" value="UniProtKB"/>
</dbReference>
<dbReference type="GO" id="GO:0090543">
    <property type="term" value="C:Flemming body"/>
    <property type="evidence" value="ECO:0007669"/>
    <property type="project" value="Ensembl"/>
</dbReference>
<dbReference type="GO" id="GO:0098978">
    <property type="term" value="C:glutamatergic synapse"/>
    <property type="evidence" value="ECO:0000314"/>
    <property type="project" value="SynGO"/>
</dbReference>
<dbReference type="GO" id="GO:0032045">
    <property type="term" value="C:guanyl-nucleotide exchange factor complex"/>
    <property type="evidence" value="ECO:0000266"/>
    <property type="project" value="ComplexPortal"/>
</dbReference>
<dbReference type="GO" id="GO:0098686">
    <property type="term" value="C:hippocampal mossy fiber to CA3 synapse"/>
    <property type="evidence" value="ECO:0000314"/>
    <property type="project" value="SynGO"/>
</dbReference>
<dbReference type="GO" id="GO:0005764">
    <property type="term" value="C:lysosome"/>
    <property type="evidence" value="ECO:0000250"/>
    <property type="project" value="UniProtKB"/>
</dbReference>
<dbReference type="GO" id="GO:0044304">
    <property type="term" value="C:main axon"/>
    <property type="evidence" value="ECO:0000250"/>
    <property type="project" value="UniProtKB"/>
</dbReference>
<dbReference type="GO" id="GO:0043005">
    <property type="term" value="C:neuron projection"/>
    <property type="evidence" value="ECO:0000314"/>
    <property type="project" value="UniProtKB"/>
</dbReference>
<dbReference type="GO" id="GO:0005634">
    <property type="term" value="C:nucleus"/>
    <property type="evidence" value="ECO:0000314"/>
    <property type="project" value="UniProtKB"/>
</dbReference>
<dbReference type="GO" id="GO:0000932">
    <property type="term" value="C:P-body"/>
    <property type="evidence" value="ECO:0000250"/>
    <property type="project" value="UniProtKB"/>
</dbReference>
<dbReference type="GO" id="GO:0043204">
    <property type="term" value="C:perikaryon"/>
    <property type="evidence" value="ECO:0000314"/>
    <property type="project" value="UniProtKB"/>
</dbReference>
<dbReference type="GO" id="GO:0098794">
    <property type="term" value="C:postsynapse"/>
    <property type="evidence" value="ECO:0000314"/>
    <property type="project" value="UniProtKB"/>
</dbReference>
<dbReference type="GO" id="GO:0098793">
    <property type="term" value="C:presynapse"/>
    <property type="evidence" value="ECO:0000314"/>
    <property type="project" value="UniProtKB"/>
</dbReference>
<dbReference type="GO" id="GO:0099523">
    <property type="term" value="C:presynaptic cytosol"/>
    <property type="evidence" value="ECO:0007669"/>
    <property type="project" value="Ensembl"/>
</dbReference>
<dbReference type="GO" id="GO:0005096">
    <property type="term" value="F:GTPase activator activity"/>
    <property type="evidence" value="ECO:0007669"/>
    <property type="project" value="Ensembl"/>
</dbReference>
<dbReference type="GO" id="GO:0005085">
    <property type="term" value="F:guanyl-nucleotide exchange factor activity"/>
    <property type="evidence" value="ECO:0000250"/>
    <property type="project" value="UniProtKB"/>
</dbReference>
<dbReference type="GO" id="GO:0031267">
    <property type="term" value="F:small GTPase binding"/>
    <property type="evidence" value="ECO:0000353"/>
    <property type="project" value="UniProtKB"/>
</dbReference>
<dbReference type="GO" id="GO:0061909">
    <property type="term" value="P:autophagosome-lysosome fusion"/>
    <property type="evidence" value="ECO:0000250"/>
    <property type="project" value="UniProtKB"/>
</dbReference>
<dbReference type="GO" id="GO:0006914">
    <property type="term" value="P:autophagy"/>
    <property type="evidence" value="ECO:0000250"/>
    <property type="project" value="UniProtKB"/>
</dbReference>
<dbReference type="GO" id="GO:0048675">
    <property type="term" value="P:axon extension"/>
    <property type="evidence" value="ECO:0000315"/>
    <property type="project" value="UniProtKB"/>
</dbReference>
<dbReference type="GO" id="GO:0006897">
    <property type="term" value="P:endocytosis"/>
    <property type="evidence" value="ECO:0000250"/>
    <property type="project" value="UniProtKB"/>
</dbReference>
<dbReference type="GO" id="GO:1902774">
    <property type="term" value="P:late endosome to lysosome transport"/>
    <property type="evidence" value="ECO:0000315"/>
    <property type="project" value="UniProtKB"/>
</dbReference>
<dbReference type="GO" id="GO:0045920">
    <property type="term" value="P:negative regulation of exocytosis"/>
    <property type="evidence" value="ECO:0000303"/>
    <property type="project" value="ComplexPortal"/>
</dbReference>
<dbReference type="GO" id="GO:0050777">
    <property type="term" value="P:negative regulation of immune response"/>
    <property type="evidence" value="ECO:0000303"/>
    <property type="project" value="ComplexPortal"/>
</dbReference>
<dbReference type="GO" id="GO:0016239">
    <property type="term" value="P:positive regulation of macroautophagy"/>
    <property type="evidence" value="ECO:0000250"/>
    <property type="project" value="UniProtKB"/>
</dbReference>
<dbReference type="GO" id="GO:0110053">
    <property type="term" value="P:regulation of actin filament organization"/>
    <property type="evidence" value="ECO:0000315"/>
    <property type="project" value="UniProtKB"/>
</dbReference>
<dbReference type="GO" id="GO:2000785">
    <property type="term" value="P:regulation of autophagosome assembly"/>
    <property type="evidence" value="ECO:0000250"/>
    <property type="project" value="UniProtKB"/>
</dbReference>
<dbReference type="GO" id="GO:0010506">
    <property type="term" value="P:regulation of autophagy"/>
    <property type="evidence" value="ECO:0000315"/>
    <property type="project" value="UniProtKB"/>
</dbReference>
<dbReference type="GO" id="GO:0032880">
    <property type="term" value="P:regulation of protein localization"/>
    <property type="evidence" value="ECO:0000315"/>
    <property type="project" value="UniProtKB"/>
</dbReference>
<dbReference type="GO" id="GO:0098693">
    <property type="term" value="P:regulation of synaptic vesicle cycle"/>
    <property type="evidence" value="ECO:0000314"/>
    <property type="project" value="SynGO"/>
</dbReference>
<dbReference type="GO" id="GO:1903432">
    <property type="term" value="P:regulation of TORC1 signaling"/>
    <property type="evidence" value="ECO:0000315"/>
    <property type="project" value="UniProtKB"/>
</dbReference>
<dbReference type="GO" id="GO:0034063">
    <property type="term" value="P:stress granule assembly"/>
    <property type="evidence" value="ECO:0000250"/>
    <property type="project" value="UniProtKB"/>
</dbReference>
<dbReference type="InterPro" id="IPR027819">
    <property type="entry name" value="C9orf72"/>
</dbReference>
<dbReference type="PANTHER" id="PTHR31855">
    <property type="entry name" value="GUANINE NUCLEOTIDE EXCHANGE C9ORF72"/>
    <property type="match status" value="1"/>
</dbReference>
<dbReference type="PANTHER" id="PTHR31855:SF2">
    <property type="entry name" value="GUANINE NUCLEOTIDE EXCHANGE FACTOR C9ORF72"/>
    <property type="match status" value="1"/>
</dbReference>
<dbReference type="Pfam" id="PF15019">
    <property type="entry name" value="C9orf72-like"/>
    <property type="match status" value="1"/>
</dbReference>
<dbReference type="PROSITE" id="PS51835">
    <property type="entry name" value="DENN_C9ORF72"/>
    <property type="match status" value="1"/>
</dbReference>
<evidence type="ECO:0000250" key="1">
    <source>
        <dbReference type="UniProtKB" id="Q96LT7"/>
    </source>
</evidence>
<evidence type="ECO:0000255" key="2">
    <source>
        <dbReference type="PROSITE-ProRule" id="PRU01179"/>
    </source>
</evidence>
<evidence type="ECO:0000269" key="3">
    <source>
    </source>
</evidence>
<evidence type="ECO:0000269" key="4">
    <source>
    </source>
</evidence>
<evidence type="ECO:0000269" key="5">
    <source>
    </source>
</evidence>
<evidence type="ECO:0000269" key="6">
    <source>
    </source>
</evidence>
<evidence type="ECO:0000269" key="7">
    <source>
    </source>
</evidence>
<evidence type="ECO:0000269" key="8">
    <source>
    </source>
</evidence>
<evidence type="ECO:0000269" key="9">
    <source>
    </source>
</evidence>
<evidence type="ECO:0000269" key="10">
    <source>
    </source>
</evidence>
<evidence type="ECO:0000269" key="11">
    <source>
    </source>
</evidence>
<evidence type="ECO:0000269" key="12">
    <source>
    </source>
</evidence>
<evidence type="ECO:0000269" key="13">
    <source>
    </source>
</evidence>
<evidence type="ECO:0000269" key="14">
    <source>
    </source>
</evidence>
<evidence type="ECO:0000305" key="15"/>
<evidence type="ECO:0000312" key="16">
    <source>
        <dbReference type="EMBL" id="BAE32850.1"/>
    </source>
</evidence>
<evidence type="ECO:0000312" key="17">
    <source>
        <dbReference type="EMBL" id="BAE39453.1"/>
    </source>
</evidence>
<evidence type="ECO:0000312" key="18">
    <source>
        <dbReference type="MGI" id="MGI:1920455"/>
    </source>
</evidence>
<gene>
    <name evidence="18" type="primary">C9orf72</name>
    <name evidence="18" type="synonym">Dennd9</name>
    <name evidence="1" type="synonym">Dennl72</name>
</gene>
<accession>Q6DFW0</accession>
<accession>A6PWW3</accession>
<accession>Q3TJP2</accession>
<accession>Q3U3D8</accession>